<protein>
    <recommendedName>
        <fullName>14-3-3 protein homolog</fullName>
    </recommendedName>
</protein>
<proteinExistence type="evidence at transcript level"/>
<comment type="similarity">
    <text evidence="2">Belongs to the 14-3-3 family.</text>
</comment>
<feature type="chain" id="PRO_0000058660" description="14-3-3 protein homolog">
    <location>
        <begin position="1"/>
        <end position="266"/>
    </location>
</feature>
<feature type="region of interest" description="Disordered" evidence="1">
    <location>
        <begin position="154"/>
        <end position="177"/>
    </location>
</feature>
<feature type="compositionally biased region" description="Polar residues" evidence="1">
    <location>
        <begin position="158"/>
        <end position="168"/>
    </location>
</feature>
<dbReference type="EMBL" id="U31542">
    <property type="protein sequence ID" value="AAC47012.1"/>
    <property type="molecule type" value="mRNA"/>
</dbReference>
<dbReference type="SMR" id="Q25538"/>
<dbReference type="VEuPathDB" id="ToxoDB:NCLIV_024820"/>
<dbReference type="CDD" id="cd08774">
    <property type="entry name" value="14-3-3"/>
    <property type="match status" value="1"/>
</dbReference>
<dbReference type="FunFam" id="1.20.190.20:FF:000001">
    <property type="entry name" value="14-3-3 gamma 1"/>
    <property type="match status" value="1"/>
</dbReference>
<dbReference type="Gene3D" id="1.20.190.20">
    <property type="entry name" value="14-3-3 domain"/>
    <property type="match status" value="1"/>
</dbReference>
<dbReference type="InterPro" id="IPR000308">
    <property type="entry name" value="14-3-3"/>
</dbReference>
<dbReference type="InterPro" id="IPR023409">
    <property type="entry name" value="14-3-3_CS"/>
</dbReference>
<dbReference type="InterPro" id="IPR036815">
    <property type="entry name" value="14-3-3_dom_sf"/>
</dbReference>
<dbReference type="InterPro" id="IPR023410">
    <property type="entry name" value="14-3-3_domain"/>
</dbReference>
<dbReference type="PANTHER" id="PTHR18860">
    <property type="entry name" value="14-3-3 PROTEIN"/>
    <property type="match status" value="1"/>
</dbReference>
<dbReference type="Pfam" id="PF00244">
    <property type="entry name" value="14-3-3"/>
    <property type="match status" value="1"/>
</dbReference>
<dbReference type="PIRSF" id="PIRSF000868">
    <property type="entry name" value="14-3-3"/>
    <property type="match status" value="1"/>
</dbReference>
<dbReference type="PRINTS" id="PR00305">
    <property type="entry name" value="1433ZETA"/>
</dbReference>
<dbReference type="SMART" id="SM00101">
    <property type="entry name" value="14_3_3"/>
    <property type="match status" value="1"/>
</dbReference>
<dbReference type="SUPFAM" id="SSF48445">
    <property type="entry name" value="14-3-3 protein"/>
    <property type="match status" value="1"/>
</dbReference>
<dbReference type="PROSITE" id="PS00796">
    <property type="entry name" value="1433_1"/>
    <property type="match status" value="1"/>
</dbReference>
<dbReference type="PROSITE" id="PS00797">
    <property type="entry name" value="1433_2"/>
    <property type="match status" value="1"/>
</dbReference>
<name>1433_NEOCA</name>
<sequence length="266" mass="30650">MAEEIKNLRDEYVYKAKLAEQAERYDEMAEAMKNLVENCLDEQQPKDELSVEERNLLSVAYKNAVGARRASWRIISSVEQKELSKQHMQNKALAAEYRQKVEEELNKICHDILQLLTDKLIPKTSDSESKVFYYKMKGDYYRYISEFSGEEGKKQAADQAQESYQKATETAEGHSPATHPIRLGLALNYSVFFYEILNLPQQACEMAKRAFDDAITEFDNVSEDSYKDSTLIMQLLRDNLTLWTSDLQADQQQQEGGEKPAEQADQ</sequence>
<organism>
    <name type="scientific">Neospora caninum</name>
    <name type="common">Coccidian parasite</name>
    <dbReference type="NCBI Taxonomy" id="29176"/>
    <lineage>
        <taxon>Eukaryota</taxon>
        <taxon>Sar</taxon>
        <taxon>Alveolata</taxon>
        <taxon>Apicomplexa</taxon>
        <taxon>Conoidasida</taxon>
        <taxon>Coccidia</taxon>
        <taxon>Eucoccidiorida</taxon>
        <taxon>Eimeriorina</taxon>
        <taxon>Sarcocystidae</taxon>
        <taxon>Neospora</taxon>
    </lineage>
</organism>
<evidence type="ECO:0000256" key="1">
    <source>
        <dbReference type="SAM" id="MobiDB-lite"/>
    </source>
</evidence>
<evidence type="ECO:0000305" key="2"/>
<accession>Q25538</accession>
<reference key="1">
    <citation type="journal article" date="1996" name="Mol. Biochem. Parasitol.">
        <title>Development of a polymerase chain reaction assay for the diagnosis of neosporosis using the Neospora caninum 14-3-3 gene.</title>
        <authorList>
            <person name="Lally N.C."/>
            <person name="Jenkins M.C."/>
            <person name="Dubey J.P."/>
        </authorList>
    </citation>
    <scope>NUCLEOTIDE SEQUENCE [MRNA]</scope>
    <source>
        <strain>Nc-1</strain>
    </source>
</reference>